<reference key="1">
    <citation type="journal article" date="2008" name="J. Biotechnol.">
        <title>The lifestyle of Corynebacterium urealyticum derived from its complete genome sequence established by pyrosequencing.</title>
        <authorList>
            <person name="Tauch A."/>
            <person name="Trost E."/>
            <person name="Tilker A."/>
            <person name="Ludewig U."/>
            <person name="Schneiker S."/>
            <person name="Goesmann A."/>
            <person name="Arnold W."/>
            <person name="Bekel T."/>
            <person name="Brinkrolf K."/>
            <person name="Brune I."/>
            <person name="Goetker S."/>
            <person name="Kalinowski J."/>
            <person name="Kamp P.-B."/>
            <person name="Lobo F.P."/>
            <person name="Viehoever P."/>
            <person name="Weisshaar B."/>
            <person name="Soriano F."/>
            <person name="Droege M."/>
            <person name="Puehler A."/>
        </authorList>
    </citation>
    <scope>NUCLEOTIDE SEQUENCE [LARGE SCALE GENOMIC DNA]</scope>
    <source>
        <strain>ATCC 43042 / DSM 7109</strain>
    </source>
</reference>
<protein>
    <recommendedName>
        <fullName evidence="1">Uracil phosphoribosyltransferase</fullName>
        <ecNumber evidence="1">2.4.2.9</ecNumber>
    </recommendedName>
    <alternativeName>
        <fullName evidence="1">UMP pyrophosphorylase</fullName>
    </alternativeName>
    <alternativeName>
        <fullName evidence="1">UPRTase</fullName>
    </alternativeName>
</protein>
<accession>B1VF60</accession>
<comment type="function">
    <text evidence="1">Catalyzes the conversion of uracil and 5-phospho-alpha-D-ribose 1-diphosphate (PRPP) to UMP and diphosphate.</text>
</comment>
<comment type="catalytic activity">
    <reaction evidence="1">
        <text>UMP + diphosphate = 5-phospho-alpha-D-ribose 1-diphosphate + uracil</text>
        <dbReference type="Rhea" id="RHEA:13017"/>
        <dbReference type="ChEBI" id="CHEBI:17568"/>
        <dbReference type="ChEBI" id="CHEBI:33019"/>
        <dbReference type="ChEBI" id="CHEBI:57865"/>
        <dbReference type="ChEBI" id="CHEBI:58017"/>
        <dbReference type="EC" id="2.4.2.9"/>
    </reaction>
</comment>
<comment type="cofactor">
    <cofactor evidence="1">
        <name>Mg(2+)</name>
        <dbReference type="ChEBI" id="CHEBI:18420"/>
    </cofactor>
    <text evidence="1">Binds 1 Mg(2+) ion per subunit. The magnesium is bound as Mg-PRPP.</text>
</comment>
<comment type="activity regulation">
    <text evidence="1">Allosterically activated by GTP.</text>
</comment>
<comment type="pathway">
    <text evidence="1">Pyrimidine metabolism; UMP biosynthesis via salvage pathway; UMP from uracil: step 1/1.</text>
</comment>
<comment type="similarity">
    <text evidence="1">Belongs to the UPRTase family.</text>
</comment>
<keyword id="KW-0021">Allosteric enzyme</keyword>
<keyword id="KW-0328">Glycosyltransferase</keyword>
<keyword id="KW-0342">GTP-binding</keyword>
<keyword id="KW-0460">Magnesium</keyword>
<keyword id="KW-0547">Nucleotide-binding</keyword>
<keyword id="KW-1185">Reference proteome</keyword>
<keyword id="KW-0808">Transferase</keyword>
<evidence type="ECO:0000255" key="1">
    <source>
        <dbReference type="HAMAP-Rule" id="MF_01218"/>
    </source>
</evidence>
<name>UPP_CORU7</name>
<proteinExistence type="inferred from homology"/>
<organism>
    <name type="scientific">Corynebacterium urealyticum (strain ATCC 43042 / DSM 7109)</name>
    <dbReference type="NCBI Taxonomy" id="504474"/>
    <lineage>
        <taxon>Bacteria</taxon>
        <taxon>Bacillati</taxon>
        <taxon>Actinomycetota</taxon>
        <taxon>Actinomycetes</taxon>
        <taxon>Mycobacteriales</taxon>
        <taxon>Corynebacteriaceae</taxon>
        <taxon>Corynebacterium</taxon>
    </lineage>
</organism>
<feature type="chain" id="PRO_1000139112" description="Uracil phosphoribosyltransferase">
    <location>
        <begin position="1"/>
        <end position="215"/>
    </location>
</feature>
<feature type="binding site" evidence="1">
    <location>
        <position position="77"/>
    </location>
    <ligand>
        <name>5-phospho-alpha-D-ribose 1-diphosphate</name>
        <dbReference type="ChEBI" id="CHEBI:58017"/>
    </ligand>
</feature>
<feature type="binding site" evidence="1">
    <location>
        <position position="102"/>
    </location>
    <ligand>
        <name>5-phospho-alpha-D-ribose 1-diphosphate</name>
        <dbReference type="ChEBI" id="CHEBI:58017"/>
    </ligand>
</feature>
<feature type="binding site" evidence="1">
    <location>
        <begin position="129"/>
        <end position="137"/>
    </location>
    <ligand>
        <name>5-phospho-alpha-D-ribose 1-diphosphate</name>
        <dbReference type="ChEBI" id="CHEBI:58017"/>
    </ligand>
</feature>
<feature type="binding site" evidence="1">
    <location>
        <position position="193"/>
    </location>
    <ligand>
        <name>uracil</name>
        <dbReference type="ChEBI" id="CHEBI:17568"/>
    </ligand>
</feature>
<feature type="binding site" evidence="1">
    <location>
        <begin position="198"/>
        <end position="200"/>
    </location>
    <ligand>
        <name>uracil</name>
        <dbReference type="ChEBI" id="CHEBI:17568"/>
    </ligand>
</feature>
<feature type="binding site" evidence="1">
    <location>
        <position position="199"/>
    </location>
    <ligand>
        <name>5-phospho-alpha-D-ribose 1-diphosphate</name>
        <dbReference type="ChEBI" id="CHEBI:58017"/>
    </ligand>
</feature>
<gene>
    <name evidence="1" type="primary">upp</name>
    <name type="ordered locus">cu0439</name>
</gene>
<dbReference type="EC" id="2.4.2.9" evidence="1"/>
<dbReference type="EMBL" id="AM942444">
    <property type="protein sequence ID" value="CAQ04399.1"/>
    <property type="molecule type" value="Genomic_DNA"/>
</dbReference>
<dbReference type="RefSeq" id="WP_012359692.1">
    <property type="nucleotide sequence ID" value="NC_010545.1"/>
</dbReference>
<dbReference type="SMR" id="B1VF60"/>
<dbReference type="STRING" id="504474.cu0439"/>
<dbReference type="GeneID" id="60605239"/>
<dbReference type="KEGG" id="cur:cu0439"/>
<dbReference type="eggNOG" id="COG0035">
    <property type="taxonomic scope" value="Bacteria"/>
</dbReference>
<dbReference type="HOGENOM" id="CLU_067096_2_3_11"/>
<dbReference type="UniPathway" id="UPA00574">
    <property type="reaction ID" value="UER00636"/>
</dbReference>
<dbReference type="Proteomes" id="UP000001727">
    <property type="component" value="Chromosome"/>
</dbReference>
<dbReference type="GO" id="GO:0005525">
    <property type="term" value="F:GTP binding"/>
    <property type="evidence" value="ECO:0007669"/>
    <property type="project" value="UniProtKB-KW"/>
</dbReference>
<dbReference type="GO" id="GO:0000287">
    <property type="term" value="F:magnesium ion binding"/>
    <property type="evidence" value="ECO:0007669"/>
    <property type="project" value="UniProtKB-UniRule"/>
</dbReference>
<dbReference type="GO" id="GO:0004845">
    <property type="term" value="F:uracil phosphoribosyltransferase activity"/>
    <property type="evidence" value="ECO:0007669"/>
    <property type="project" value="UniProtKB-UniRule"/>
</dbReference>
<dbReference type="GO" id="GO:0044206">
    <property type="term" value="P:UMP salvage"/>
    <property type="evidence" value="ECO:0007669"/>
    <property type="project" value="UniProtKB-UniRule"/>
</dbReference>
<dbReference type="GO" id="GO:0006223">
    <property type="term" value="P:uracil salvage"/>
    <property type="evidence" value="ECO:0007669"/>
    <property type="project" value="InterPro"/>
</dbReference>
<dbReference type="CDD" id="cd06223">
    <property type="entry name" value="PRTases_typeI"/>
    <property type="match status" value="1"/>
</dbReference>
<dbReference type="FunFam" id="3.40.50.2020:FF:000003">
    <property type="entry name" value="Uracil phosphoribosyltransferase"/>
    <property type="match status" value="1"/>
</dbReference>
<dbReference type="Gene3D" id="3.40.50.2020">
    <property type="match status" value="1"/>
</dbReference>
<dbReference type="HAMAP" id="MF_01218_B">
    <property type="entry name" value="Upp_B"/>
    <property type="match status" value="1"/>
</dbReference>
<dbReference type="InterPro" id="IPR000836">
    <property type="entry name" value="PRibTrfase_dom"/>
</dbReference>
<dbReference type="InterPro" id="IPR029057">
    <property type="entry name" value="PRTase-like"/>
</dbReference>
<dbReference type="InterPro" id="IPR034332">
    <property type="entry name" value="Upp_B"/>
</dbReference>
<dbReference type="InterPro" id="IPR050054">
    <property type="entry name" value="UPRTase/APRTase"/>
</dbReference>
<dbReference type="InterPro" id="IPR005765">
    <property type="entry name" value="Ura_phspho_trans"/>
</dbReference>
<dbReference type="NCBIfam" id="NF001097">
    <property type="entry name" value="PRK00129.1"/>
    <property type="match status" value="1"/>
</dbReference>
<dbReference type="NCBIfam" id="TIGR01091">
    <property type="entry name" value="upp"/>
    <property type="match status" value="1"/>
</dbReference>
<dbReference type="PANTHER" id="PTHR32315">
    <property type="entry name" value="ADENINE PHOSPHORIBOSYLTRANSFERASE"/>
    <property type="match status" value="1"/>
</dbReference>
<dbReference type="PANTHER" id="PTHR32315:SF4">
    <property type="entry name" value="URACIL PHOSPHORIBOSYLTRANSFERASE, CHLOROPLASTIC"/>
    <property type="match status" value="1"/>
</dbReference>
<dbReference type="Pfam" id="PF14681">
    <property type="entry name" value="UPRTase"/>
    <property type="match status" value="1"/>
</dbReference>
<dbReference type="SUPFAM" id="SSF53271">
    <property type="entry name" value="PRTase-like"/>
    <property type="match status" value="1"/>
</dbReference>
<sequence>MDIKVVNHPLVRARLTIMRDARSNNVVFRDALADLGAMLIYEASNDLETESFDVETPVSTAEGHRLKNPPIIVPIIRAGLGMIDPALSMIPDAQVGFIGLARDEKTHEPVPYLEALPDDLSGQPVMLVDPMLATGGSLLNAVELLVEHGADDITCVCMVSAQPGVDKLVNSGLPVRKLVTATIDPALDENAYIDPGLGDAGDRLYGPRNIDLESR</sequence>